<sequence>MTKGILGRKIGMTQVFAENGELIPVTVIAANPNVVLQKKTTETDGYNAIQLGFEDKREKLTNKPEQGHTAKASTTPKRFIREIRDADVDGLEVGQEVKVDVFATGEIVDVTGISKGKGFQGVIKRHGQSRGPMSHGSRYHRRPGSMGPVAPNRVFKGKKLAGRMGGDQVTIQNLEIVQVDTERNLLLVKGNVPGAKKSLVVVQGAVKVSK</sequence>
<name>RL3_BACC0</name>
<organism>
    <name type="scientific">Bacillus cereus (strain AH820)</name>
    <dbReference type="NCBI Taxonomy" id="405535"/>
    <lineage>
        <taxon>Bacteria</taxon>
        <taxon>Bacillati</taxon>
        <taxon>Bacillota</taxon>
        <taxon>Bacilli</taxon>
        <taxon>Bacillales</taxon>
        <taxon>Bacillaceae</taxon>
        <taxon>Bacillus</taxon>
        <taxon>Bacillus cereus group</taxon>
    </lineage>
</organism>
<keyword id="KW-0687">Ribonucleoprotein</keyword>
<keyword id="KW-0689">Ribosomal protein</keyword>
<keyword id="KW-0694">RNA-binding</keyword>
<keyword id="KW-0699">rRNA-binding</keyword>
<proteinExistence type="inferred from homology"/>
<reference key="1">
    <citation type="submission" date="2008-10" db="EMBL/GenBank/DDBJ databases">
        <title>Genome sequence of Bacillus cereus AH820.</title>
        <authorList>
            <person name="Dodson R.J."/>
            <person name="Durkin A.S."/>
            <person name="Rosovitz M.J."/>
            <person name="Rasko D.A."/>
            <person name="Hoffmaster A."/>
            <person name="Ravel J."/>
            <person name="Sutton G."/>
        </authorList>
    </citation>
    <scope>NUCLEOTIDE SEQUENCE [LARGE SCALE GENOMIC DNA]</scope>
    <source>
        <strain>AH820</strain>
    </source>
</reference>
<comment type="function">
    <text evidence="1">One of the primary rRNA binding proteins, it binds directly near the 3'-end of the 23S rRNA, where it nucleates assembly of the 50S subunit.</text>
</comment>
<comment type="subunit">
    <text evidence="1">Part of the 50S ribosomal subunit. Forms a cluster with proteins L14 and L19.</text>
</comment>
<comment type="similarity">
    <text evidence="1">Belongs to the universal ribosomal protein uL3 family.</text>
</comment>
<feature type="chain" id="PRO_1000141822" description="Large ribosomal subunit protein uL3">
    <location>
        <begin position="1"/>
        <end position="210"/>
    </location>
</feature>
<feature type="region of interest" description="Disordered" evidence="2">
    <location>
        <begin position="125"/>
        <end position="151"/>
    </location>
</feature>
<accession>B7JKB9</accession>
<protein>
    <recommendedName>
        <fullName evidence="1">Large ribosomal subunit protein uL3</fullName>
    </recommendedName>
    <alternativeName>
        <fullName evidence="3">50S ribosomal protein L3</fullName>
    </alternativeName>
</protein>
<evidence type="ECO:0000255" key="1">
    <source>
        <dbReference type="HAMAP-Rule" id="MF_01325"/>
    </source>
</evidence>
<evidence type="ECO:0000256" key="2">
    <source>
        <dbReference type="SAM" id="MobiDB-lite"/>
    </source>
</evidence>
<evidence type="ECO:0000305" key="3"/>
<dbReference type="EMBL" id="CP001283">
    <property type="protein sequence ID" value="ACK87160.1"/>
    <property type="molecule type" value="Genomic_DNA"/>
</dbReference>
<dbReference type="RefSeq" id="WP_000160207.1">
    <property type="nucleotide sequence ID" value="NC_011773.1"/>
</dbReference>
<dbReference type="SMR" id="B7JKB9"/>
<dbReference type="GeneID" id="93010943"/>
<dbReference type="KEGG" id="bcu:BCAH820_0122"/>
<dbReference type="HOGENOM" id="CLU_044142_4_1_9"/>
<dbReference type="Proteomes" id="UP000001363">
    <property type="component" value="Chromosome"/>
</dbReference>
<dbReference type="GO" id="GO:0022625">
    <property type="term" value="C:cytosolic large ribosomal subunit"/>
    <property type="evidence" value="ECO:0007669"/>
    <property type="project" value="TreeGrafter"/>
</dbReference>
<dbReference type="GO" id="GO:0019843">
    <property type="term" value="F:rRNA binding"/>
    <property type="evidence" value="ECO:0007669"/>
    <property type="project" value="UniProtKB-UniRule"/>
</dbReference>
<dbReference type="GO" id="GO:0003735">
    <property type="term" value="F:structural constituent of ribosome"/>
    <property type="evidence" value="ECO:0007669"/>
    <property type="project" value="InterPro"/>
</dbReference>
<dbReference type="GO" id="GO:0006412">
    <property type="term" value="P:translation"/>
    <property type="evidence" value="ECO:0007669"/>
    <property type="project" value="UniProtKB-UniRule"/>
</dbReference>
<dbReference type="FunFam" id="2.40.30.10:FF:000004">
    <property type="entry name" value="50S ribosomal protein L3"/>
    <property type="match status" value="1"/>
</dbReference>
<dbReference type="FunFam" id="3.30.160.810:FF:000002">
    <property type="entry name" value="50S ribosomal protein L3"/>
    <property type="match status" value="1"/>
</dbReference>
<dbReference type="Gene3D" id="3.30.160.810">
    <property type="match status" value="1"/>
</dbReference>
<dbReference type="Gene3D" id="2.40.30.10">
    <property type="entry name" value="Translation factors"/>
    <property type="match status" value="1"/>
</dbReference>
<dbReference type="HAMAP" id="MF_01325_B">
    <property type="entry name" value="Ribosomal_uL3_B"/>
    <property type="match status" value="1"/>
</dbReference>
<dbReference type="InterPro" id="IPR000597">
    <property type="entry name" value="Ribosomal_uL3"/>
</dbReference>
<dbReference type="InterPro" id="IPR019927">
    <property type="entry name" value="Ribosomal_uL3_bac/org-type"/>
</dbReference>
<dbReference type="InterPro" id="IPR019926">
    <property type="entry name" value="Ribosomal_uL3_CS"/>
</dbReference>
<dbReference type="InterPro" id="IPR009000">
    <property type="entry name" value="Transl_B-barrel_sf"/>
</dbReference>
<dbReference type="NCBIfam" id="TIGR03625">
    <property type="entry name" value="L3_bact"/>
    <property type="match status" value="1"/>
</dbReference>
<dbReference type="PANTHER" id="PTHR11229">
    <property type="entry name" value="50S RIBOSOMAL PROTEIN L3"/>
    <property type="match status" value="1"/>
</dbReference>
<dbReference type="PANTHER" id="PTHR11229:SF16">
    <property type="entry name" value="LARGE RIBOSOMAL SUBUNIT PROTEIN UL3C"/>
    <property type="match status" value="1"/>
</dbReference>
<dbReference type="Pfam" id="PF00297">
    <property type="entry name" value="Ribosomal_L3"/>
    <property type="match status" value="1"/>
</dbReference>
<dbReference type="SUPFAM" id="SSF50447">
    <property type="entry name" value="Translation proteins"/>
    <property type="match status" value="1"/>
</dbReference>
<dbReference type="PROSITE" id="PS00474">
    <property type="entry name" value="RIBOSOMAL_L3"/>
    <property type="match status" value="1"/>
</dbReference>
<gene>
    <name evidence="1" type="primary">rplC</name>
    <name type="ordered locus">BCAH820_0122</name>
</gene>